<accession>Q75B48</accession>
<reference key="1">
    <citation type="journal article" date="2004" name="Science">
        <title>The Ashbya gossypii genome as a tool for mapping the ancient Saccharomyces cerevisiae genome.</title>
        <authorList>
            <person name="Dietrich F.S."/>
            <person name="Voegeli S."/>
            <person name="Brachat S."/>
            <person name="Lerch A."/>
            <person name="Gates K."/>
            <person name="Steiner S."/>
            <person name="Mohr C."/>
            <person name="Poehlmann R."/>
            <person name="Luedi P."/>
            <person name="Choi S."/>
            <person name="Wing R.A."/>
            <person name="Flavier A."/>
            <person name="Gaffney T.D."/>
            <person name="Philippsen P."/>
        </authorList>
    </citation>
    <scope>NUCLEOTIDE SEQUENCE [LARGE SCALE GENOMIC DNA]</scope>
    <source>
        <strain>ATCC 10895 / CBS 109.51 / FGSC 9923 / NRRL Y-1056</strain>
    </source>
</reference>
<reference key="2">
    <citation type="journal article" date="2013" name="G3 (Bethesda)">
        <title>Genomes of Ashbya fungi isolated from insects reveal four mating-type loci, numerous translocations, lack of transposons, and distinct gene duplications.</title>
        <authorList>
            <person name="Dietrich F.S."/>
            <person name="Voegeli S."/>
            <person name="Kuo S."/>
            <person name="Philippsen P."/>
        </authorList>
    </citation>
    <scope>GENOME REANNOTATION</scope>
    <source>
        <strain>ATCC 10895 / CBS 109.51 / FGSC 9923 / NRRL Y-1056</strain>
    </source>
</reference>
<keyword id="KW-0496">Mitochondrion</keyword>
<keyword id="KW-1185">Reference proteome</keyword>
<keyword id="KW-0687">Ribonucleoprotein</keyword>
<keyword id="KW-0689">Ribosomal protein</keyword>
<proteinExistence type="inferred from homology"/>
<protein>
    <recommendedName>
        <fullName evidence="3">Small ribosomal subunit protein bS1m</fullName>
    </recommendedName>
    <alternativeName>
        <fullName>37S ribosomal protein MRP51, mitochondrial</fullName>
        <shortName>Mitochondrial ribosomal protein 51</shortName>
    </alternativeName>
</protein>
<dbReference type="EMBL" id="AE016817">
    <property type="protein sequence ID" value="AAS51649.1"/>
    <property type="molecule type" value="Genomic_DNA"/>
</dbReference>
<dbReference type="RefSeq" id="NP_983825.1">
    <property type="nucleotide sequence ID" value="NM_209178.1"/>
</dbReference>
<dbReference type="SMR" id="Q75B48"/>
<dbReference type="FunCoup" id="Q75B48">
    <property type="interactions" value="155"/>
</dbReference>
<dbReference type="STRING" id="284811.Q75B48"/>
<dbReference type="EnsemblFungi" id="AAS51649">
    <property type="protein sequence ID" value="AAS51649"/>
    <property type="gene ID" value="AGOS_ADL271W"/>
</dbReference>
<dbReference type="GeneID" id="4619960"/>
<dbReference type="KEGG" id="ago:AGOS_ADL271W"/>
<dbReference type="eggNOG" id="ENOG502R4KN">
    <property type="taxonomic scope" value="Eukaryota"/>
</dbReference>
<dbReference type="HOGENOM" id="CLU_063080_0_0_1"/>
<dbReference type="InParanoid" id="Q75B48"/>
<dbReference type="OMA" id="KNAPGKH"/>
<dbReference type="OrthoDB" id="2735536at2759"/>
<dbReference type="Proteomes" id="UP000000591">
    <property type="component" value="Chromosome IV"/>
</dbReference>
<dbReference type="GO" id="GO:0005763">
    <property type="term" value="C:mitochondrial small ribosomal subunit"/>
    <property type="evidence" value="ECO:0000318"/>
    <property type="project" value="GO_Central"/>
</dbReference>
<dbReference type="GO" id="GO:0003735">
    <property type="term" value="F:structural constituent of ribosome"/>
    <property type="evidence" value="ECO:0000318"/>
    <property type="project" value="GO_Central"/>
</dbReference>
<dbReference type="GO" id="GO:0070124">
    <property type="term" value="P:mitochondrial translational initiation"/>
    <property type="evidence" value="ECO:0000318"/>
    <property type="project" value="GO_Central"/>
</dbReference>
<dbReference type="InterPro" id="IPR016712">
    <property type="entry name" value="Rbsml_bS1m-like"/>
</dbReference>
<dbReference type="PANTHER" id="PTHR28058">
    <property type="entry name" value="37S RIBOSOMAL PROTEIN MRP51, MITOCHONDRIAL"/>
    <property type="match status" value="1"/>
</dbReference>
<dbReference type="PANTHER" id="PTHR28058:SF1">
    <property type="entry name" value="SMALL RIBOSOMAL SUBUNIT PROTEIN BS1M"/>
    <property type="match status" value="1"/>
</dbReference>
<dbReference type="Pfam" id="PF11709">
    <property type="entry name" value="Mit_ribos_Mrp51"/>
    <property type="match status" value="1"/>
</dbReference>
<dbReference type="PIRSF" id="PIRSF018156">
    <property type="entry name" value="MRPL51_fungal"/>
    <property type="match status" value="1"/>
</dbReference>
<evidence type="ECO:0000250" key="1"/>
<evidence type="ECO:0000256" key="2">
    <source>
        <dbReference type="SAM" id="MobiDB-lite"/>
    </source>
</evidence>
<evidence type="ECO:0000305" key="3"/>
<feature type="chain" id="PRO_0000087700" description="Small ribosomal subunit protein bS1m">
    <location>
        <begin position="1"/>
        <end position="360"/>
    </location>
</feature>
<feature type="region of interest" description="Disordered" evidence="2">
    <location>
        <begin position="1"/>
        <end position="31"/>
    </location>
</feature>
<feature type="compositionally biased region" description="Low complexity" evidence="2">
    <location>
        <begin position="1"/>
        <end position="15"/>
    </location>
</feature>
<name>RT51_EREGS</name>
<sequence length="360" mass="40210">MSSSNLSSILRNSRIAQVPKPKGPLFSPDKKYVPTHQLIENKASTMHRQEWGMKSSIPSRSKSRYLIFDELDTQQRLTSFEAIGQYQWNRIRIQELGVVPERATAGNSFQTSADANAPSNPLFSGFSSRLSARTPLSSFFGLTSKSDAKQWKAAEKKVAALRPAFKKWLQDHHPHLIIHKDQMDPADFRKRAVEFITEIATRSSGAGGSWKVVGNGGLTYGLKGRLQQSPLGIKQNTVVEGRILQTNGMEKSVAAAGFVGNGMLGTNLRKVDYAMGDLVRTARFPFEVKQARLLENGRLLMDMSLIEPKNTARKYGYGAKENKNRTYIFQRGAVNERKISSEESAQQAEELLNILTNFEN</sequence>
<comment type="function">
    <text evidence="1">Involved in mitochondrial genome encoded proteins translation.</text>
</comment>
<comment type="subunit">
    <text evidence="1">Component of the mitochondrial small ribosomal subunit.</text>
</comment>
<comment type="subcellular location">
    <subcellularLocation>
        <location evidence="1">Mitochondrion</location>
    </subcellularLocation>
</comment>
<comment type="similarity">
    <text evidence="3">Belongs to the bacterial ribosomal protein bS1 family.</text>
</comment>
<organism>
    <name type="scientific">Eremothecium gossypii (strain ATCC 10895 / CBS 109.51 / FGSC 9923 / NRRL Y-1056)</name>
    <name type="common">Yeast</name>
    <name type="synonym">Ashbya gossypii</name>
    <dbReference type="NCBI Taxonomy" id="284811"/>
    <lineage>
        <taxon>Eukaryota</taxon>
        <taxon>Fungi</taxon>
        <taxon>Dikarya</taxon>
        <taxon>Ascomycota</taxon>
        <taxon>Saccharomycotina</taxon>
        <taxon>Saccharomycetes</taxon>
        <taxon>Saccharomycetales</taxon>
        <taxon>Saccharomycetaceae</taxon>
        <taxon>Eremothecium</taxon>
    </lineage>
</organism>
<gene>
    <name type="primary">MRP51</name>
    <name type="ordered locus">ADL271W</name>
</gene>